<gene>
    <name evidence="1" type="primary">xerC</name>
    <name type="ordered locus">SAS1186</name>
</gene>
<reference key="1">
    <citation type="journal article" date="2004" name="Proc. Natl. Acad. Sci. U.S.A.">
        <title>Complete genomes of two clinical Staphylococcus aureus strains: evidence for the rapid evolution of virulence and drug resistance.</title>
        <authorList>
            <person name="Holden M.T.G."/>
            <person name="Feil E.J."/>
            <person name="Lindsay J.A."/>
            <person name="Peacock S.J."/>
            <person name="Day N.P.J."/>
            <person name="Enright M.C."/>
            <person name="Foster T.J."/>
            <person name="Moore C.E."/>
            <person name="Hurst L."/>
            <person name="Atkin R."/>
            <person name="Barron A."/>
            <person name="Bason N."/>
            <person name="Bentley S.D."/>
            <person name="Chillingworth C."/>
            <person name="Chillingworth T."/>
            <person name="Churcher C."/>
            <person name="Clark L."/>
            <person name="Corton C."/>
            <person name="Cronin A."/>
            <person name="Doggett J."/>
            <person name="Dowd L."/>
            <person name="Feltwell T."/>
            <person name="Hance Z."/>
            <person name="Harris B."/>
            <person name="Hauser H."/>
            <person name="Holroyd S."/>
            <person name="Jagels K."/>
            <person name="James K.D."/>
            <person name="Lennard N."/>
            <person name="Line A."/>
            <person name="Mayes R."/>
            <person name="Moule S."/>
            <person name="Mungall K."/>
            <person name="Ormond D."/>
            <person name="Quail M.A."/>
            <person name="Rabbinowitsch E."/>
            <person name="Rutherford K.M."/>
            <person name="Sanders M."/>
            <person name="Sharp S."/>
            <person name="Simmonds M."/>
            <person name="Stevens K."/>
            <person name="Whitehead S."/>
            <person name="Barrell B.G."/>
            <person name="Spratt B.G."/>
            <person name="Parkhill J."/>
        </authorList>
    </citation>
    <scope>NUCLEOTIDE SEQUENCE [LARGE SCALE GENOMIC DNA]</scope>
    <source>
        <strain>MSSA476</strain>
    </source>
</reference>
<sequence>MNHIQEAFLNTLKVERNFSEHTLKSYQDDLIQFNQFLEQEHLQLKTFEYRDARNYLSYLYSNHLKRTSVSRKISTLRTFYEYWMTLDENIINPFVQLVHPKKEKYLPQFFYEEEMEALFKTVEEDTSKSLRDRVILELLYATGIRVSELVNIKKQDIDFYANGVTVLGKGSKERFVPFGAYCRQSIENYLEHFKPIQSCNHDFLIVNMKGEAITERGVRYVLNDIVKRTAGVSEIHPHKLRHTFATHLLNQGADLRTVQSLLGHVNLSTTGKYTHVSNQQLRKVYLNAHPRAKKENET</sequence>
<feature type="chain" id="PRO_0000095333" description="Tyrosine recombinase XerC">
    <location>
        <begin position="1"/>
        <end position="298"/>
    </location>
</feature>
<feature type="domain" description="Core-binding (CB)" evidence="3">
    <location>
        <begin position="1"/>
        <end position="84"/>
    </location>
</feature>
<feature type="domain" description="Tyr recombinase" evidence="2">
    <location>
        <begin position="105"/>
        <end position="286"/>
    </location>
</feature>
<feature type="active site" evidence="1">
    <location>
        <position position="145"/>
    </location>
</feature>
<feature type="active site" evidence="1">
    <location>
        <position position="169"/>
    </location>
</feature>
<feature type="active site" evidence="1">
    <location>
        <position position="238"/>
    </location>
</feature>
<feature type="active site" evidence="1">
    <location>
        <position position="241"/>
    </location>
</feature>
<feature type="active site" evidence="1">
    <location>
        <position position="264"/>
    </location>
</feature>
<feature type="active site" description="O-(3'-phospho-DNA)-tyrosine intermediate" evidence="1">
    <location>
        <position position="273"/>
    </location>
</feature>
<organism>
    <name type="scientific">Staphylococcus aureus (strain MSSA476)</name>
    <dbReference type="NCBI Taxonomy" id="282459"/>
    <lineage>
        <taxon>Bacteria</taxon>
        <taxon>Bacillati</taxon>
        <taxon>Bacillota</taxon>
        <taxon>Bacilli</taxon>
        <taxon>Bacillales</taxon>
        <taxon>Staphylococcaceae</taxon>
        <taxon>Staphylococcus</taxon>
    </lineage>
</organism>
<name>XERC_STAAS</name>
<keyword id="KW-0131">Cell cycle</keyword>
<keyword id="KW-0132">Cell division</keyword>
<keyword id="KW-0159">Chromosome partition</keyword>
<keyword id="KW-0963">Cytoplasm</keyword>
<keyword id="KW-0229">DNA integration</keyword>
<keyword id="KW-0233">DNA recombination</keyword>
<keyword id="KW-0238">DNA-binding</keyword>
<comment type="function">
    <text evidence="1">Site-specific tyrosine recombinase, which acts by catalyzing the cutting and rejoining of the recombining DNA molecules. The XerC-XerD complex is essential to convert dimers of the bacterial chromosome into monomers to permit their segregation at cell division. It also contributes to the segregational stability of plasmids.</text>
</comment>
<comment type="subunit">
    <text evidence="1">Forms a cyclic heterotetrameric complex composed of two molecules of XerC and two molecules of XerD.</text>
</comment>
<comment type="subcellular location">
    <subcellularLocation>
        <location evidence="1">Cytoplasm</location>
    </subcellularLocation>
</comment>
<comment type="similarity">
    <text evidence="1">Belongs to the 'phage' integrase family. XerC subfamily.</text>
</comment>
<evidence type="ECO:0000255" key="1">
    <source>
        <dbReference type="HAMAP-Rule" id="MF_01808"/>
    </source>
</evidence>
<evidence type="ECO:0000255" key="2">
    <source>
        <dbReference type="PROSITE-ProRule" id="PRU01246"/>
    </source>
</evidence>
<evidence type="ECO:0000255" key="3">
    <source>
        <dbReference type="PROSITE-ProRule" id="PRU01248"/>
    </source>
</evidence>
<accession>Q6G9W1</accession>
<dbReference type="EMBL" id="BX571857">
    <property type="protein sequence ID" value="CAG42963.1"/>
    <property type="molecule type" value="Genomic_DNA"/>
</dbReference>
<dbReference type="RefSeq" id="WP_001015602.1">
    <property type="nucleotide sequence ID" value="NC_002953.3"/>
</dbReference>
<dbReference type="SMR" id="Q6G9W1"/>
<dbReference type="KEGG" id="sas:SAS1186"/>
<dbReference type="HOGENOM" id="CLU_027562_9_0_9"/>
<dbReference type="GO" id="GO:0005737">
    <property type="term" value="C:cytoplasm"/>
    <property type="evidence" value="ECO:0007669"/>
    <property type="project" value="UniProtKB-SubCell"/>
</dbReference>
<dbReference type="GO" id="GO:0003677">
    <property type="term" value="F:DNA binding"/>
    <property type="evidence" value="ECO:0007669"/>
    <property type="project" value="UniProtKB-KW"/>
</dbReference>
<dbReference type="GO" id="GO:0009037">
    <property type="term" value="F:tyrosine-based site-specific recombinase activity"/>
    <property type="evidence" value="ECO:0007669"/>
    <property type="project" value="UniProtKB-UniRule"/>
</dbReference>
<dbReference type="GO" id="GO:0051301">
    <property type="term" value="P:cell division"/>
    <property type="evidence" value="ECO:0007669"/>
    <property type="project" value="UniProtKB-KW"/>
</dbReference>
<dbReference type="GO" id="GO:0007059">
    <property type="term" value="P:chromosome segregation"/>
    <property type="evidence" value="ECO:0007669"/>
    <property type="project" value="UniProtKB-UniRule"/>
</dbReference>
<dbReference type="GO" id="GO:0006313">
    <property type="term" value="P:DNA transposition"/>
    <property type="evidence" value="ECO:0007669"/>
    <property type="project" value="UniProtKB-UniRule"/>
</dbReference>
<dbReference type="CDD" id="cd00798">
    <property type="entry name" value="INT_XerDC_C"/>
    <property type="match status" value="1"/>
</dbReference>
<dbReference type="Gene3D" id="1.10.150.130">
    <property type="match status" value="1"/>
</dbReference>
<dbReference type="Gene3D" id="1.10.443.10">
    <property type="entry name" value="Intergrase catalytic core"/>
    <property type="match status" value="1"/>
</dbReference>
<dbReference type="HAMAP" id="MF_01808">
    <property type="entry name" value="Recomb_XerC_XerD"/>
    <property type="match status" value="1"/>
</dbReference>
<dbReference type="InterPro" id="IPR044068">
    <property type="entry name" value="CB"/>
</dbReference>
<dbReference type="InterPro" id="IPR011010">
    <property type="entry name" value="DNA_brk_join_enz"/>
</dbReference>
<dbReference type="InterPro" id="IPR013762">
    <property type="entry name" value="Integrase-like_cat_sf"/>
</dbReference>
<dbReference type="InterPro" id="IPR002104">
    <property type="entry name" value="Integrase_catalytic"/>
</dbReference>
<dbReference type="InterPro" id="IPR010998">
    <property type="entry name" value="Integrase_recombinase_N"/>
</dbReference>
<dbReference type="InterPro" id="IPR004107">
    <property type="entry name" value="Integrase_SAM-like_N"/>
</dbReference>
<dbReference type="InterPro" id="IPR011931">
    <property type="entry name" value="Recomb_XerC"/>
</dbReference>
<dbReference type="InterPro" id="IPR023009">
    <property type="entry name" value="Tyrosine_recombinase_XerC/XerD"/>
</dbReference>
<dbReference type="InterPro" id="IPR050090">
    <property type="entry name" value="Tyrosine_recombinase_XerCD"/>
</dbReference>
<dbReference type="NCBIfam" id="NF001399">
    <property type="entry name" value="PRK00283.1"/>
    <property type="match status" value="1"/>
</dbReference>
<dbReference type="NCBIfam" id="NF040815">
    <property type="entry name" value="recomb_XerA_Arch"/>
    <property type="match status" value="1"/>
</dbReference>
<dbReference type="NCBIfam" id="TIGR02224">
    <property type="entry name" value="recomb_XerC"/>
    <property type="match status" value="1"/>
</dbReference>
<dbReference type="PANTHER" id="PTHR30349">
    <property type="entry name" value="PHAGE INTEGRASE-RELATED"/>
    <property type="match status" value="1"/>
</dbReference>
<dbReference type="PANTHER" id="PTHR30349:SF77">
    <property type="entry name" value="TYROSINE RECOMBINASE XERC"/>
    <property type="match status" value="1"/>
</dbReference>
<dbReference type="Pfam" id="PF02899">
    <property type="entry name" value="Phage_int_SAM_1"/>
    <property type="match status" value="1"/>
</dbReference>
<dbReference type="Pfam" id="PF00589">
    <property type="entry name" value="Phage_integrase"/>
    <property type="match status" value="1"/>
</dbReference>
<dbReference type="SUPFAM" id="SSF56349">
    <property type="entry name" value="DNA breaking-rejoining enzymes"/>
    <property type="match status" value="1"/>
</dbReference>
<dbReference type="PROSITE" id="PS51900">
    <property type="entry name" value="CB"/>
    <property type="match status" value="1"/>
</dbReference>
<dbReference type="PROSITE" id="PS51898">
    <property type="entry name" value="TYR_RECOMBINASE"/>
    <property type="match status" value="1"/>
</dbReference>
<proteinExistence type="inferred from homology"/>
<protein>
    <recommendedName>
        <fullName evidence="1">Tyrosine recombinase XerC</fullName>
    </recommendedName>
</protein>